<evidence type="ECO:0000255" key="1">
    <source>
        <dbReference type="HAMAP-Rule" id="MF_00260"/>
    </source>
</evidence>
<keyword id="KW-0627">Porphyrin biosynthesis</keyword>
<keyword id="KW-0808">Transferase</keyword>
<comment type="function">
    <text evidence="1">Tetrapolymerization of the monopyrrole PBG into the hydroxymethylbilane pre-uroporphyrinogen in several discrete steps.</text>
</comment>
<comment type="catalytic activity">
    <reaction evidence="1">
        <text>4 porphobilinogen + H2O = hydroxymethylbilane + 4 NH4(+)</text>
        <dbReference type="Rhea" id="RHEA:13185"/>
        <dbReference type="ChEBI" id="CHEBI:15377"/>
        <dbReference type="ChEBI" id="CHEBI:28938"/>
        <dbReference type="ChEBI" id="CHEBI:57845"/>
        <dbReference type="ChEBI" id="CHEBI:58126"/>
        <dbReference type="EC" id="2.5.1.61"/>
    </reaction>
</comment>
<comment type="cofactor">
    <cofactor evidence="1">
        <name>dipyrromethane</name>
        <dbReference type="ChEBI" id="CHEBI:60342"/>
    </cofactor>
    <text evidence="1">Binds 1 dipyrromethane group covalently.</text>
</comment>
<comment type="pathway">
    <text evidence="1">Porphyrin-containing compound metabolism; protoporphyrin-IX biosynthesis; coproporphyrinogen-III from 5-aminolevulinate: step 2/4.</text>
</comment>
<comment type="subunit">
    <text evidence="1">Monomer.</text>
</comment>
<comment type="miscellaneous">
    <text evidence="1">The porphobilinogen subunits are added to the dipyrromethane group.</text>
</comment>
<comment type="similarity">
    <text evidence="1">Belongs to the HMBS family.</text>
</comment>
<dbReference type="EC" id="2.5.1.61" evidence="1"/>
<dbReference type="EMBL" id="CP001661">
    <property type="protein sequence ID" value="ACT16489.1"/>
    <property type="molecule type" value="Genomic_DNA"/>
</dbReference>
<dbReference type="SMR" id="C6DYY8"/>
<dbReference type="STRING" id="443144.GM21_0408"/>
<dbReference type="KEGG" id="gem:GM21_0408"/>
<dbReference type="eggNOG" id="COG0181">
    <property type="taxonomic scope" value="Bacteria"/>
</dbReference>
<dbReference type="HOGENOM" id="CLU_019704_0_2_7"/>
<dbReference type="OrthoDB" id="9810298at2"/>
<dbReference type="UniPathway" id="UPA00251">
    <property type="reaction ID" value="UER00319"/>
</dbReference>
<dbReference type="GO" id="GO:0005737">
    <property type="term" value="C:cytoplasm"/>
    <property type="evidence" value="ECO:0007669"/>
    <property type="project" value="TreeGrafter"/>
</dbReference>
<dbReference type="GO" id="GO:0004418">
    <property type="term" value="F:hydroxymethylbilane synthase activity"/>
    <property type="evidence" value="ECO:0007669"/>
    <property type="project" value="UniProtKB-UniRule"/>
</dbReference>
<dbReference type="GO" id="GO:0006782">
    <property type="term" value="P:protoporphyrinogen IX biosynthetic process"/>
    <property type="evidence" value="ECO:0007669"/>
    <property type="project" value="UniProtKB-UniRule"/>
</dbReference>
<dbReference type="CDD" id="cd13646">
    <property type="entry name" value="PBP2_EcHMBS_like"/>
    <property type="match status" value="1"/>
</dbReference>
<dbReference type="FunFam" id="3.30.160.40:FF:000002">
    <property type="entry name" value="Porphobilinogen deaminase"/>
    <property type="match status" value="1"/>
</dbReference>
<dbReference type="FunFam" id="3.40.190.10:FF:000004">
    <property type="entry name" value="Porphobilinogen deaminase"/>
    <property type="match status" value="1"/>
</dbReference>
<dbReference type="FunFam" id="3.40.190.10:FF:000005">
    <property type="entry name" value="Porphobilinogen deaminase"/>
    <property type="match status" value="1"/>
</dbReference>
<dbReference type="Gene3D" id="3.40.190.10">
    <property type="entry name" value="Periplasmic binding protein-like II"/>
    <property type="match status" value="2"/>
</dbReference>
<dbReference type="Gene3D" id="3.30.160.40">
    <property type="entry name" value="Porphobilinogen deaminase, C-terminal domain"/>
    <property type="match status" value="1"/>
</dbReference>
<dbReference type="HAMAP" id="MF_00260">
    <property type="entry name" value="Porphobil_deam"/>
    <property type="match status" value="1"/>
</dbReference>
<dbReference type="InterPro" id="IPR000860">
    <property type="entry name" value="HemC"/>
</dbReference>
<dbReference type="InterPro" id="IPR022419">
    <property type="entry name" value="Porphobilin_deaminase_cofac_BS"/>
</dbReference>
<dbReference type="InterPro" id="IPR022417">
    <property type="entry name" value="Porphobilin_deaminase_N"/>
</dbReference>
<dbReference type="InterPro" id="IPR022418">
    <property type="entry name" value="Porphobilinogen_deaminase_C"/>
</dbReference>
<dbReference type="InterPro" id="IPR036803">
    <property type="entry name" value="Porphobilinogen_deaminase_C_sf"/>
</dbReference>
<dbReference type="NCBIfam" id="TIGR00212">
    <property type="entry name" value="hemC"/>
    <property type="match status" value="1"/>
</dbReference>
<dbReference type="PANTHER" id="PTHR11557">
    <property type="entry name" value="PORPHOBILINOGEN DEAMINASE"/>
    <property type="match status" value="1"/>
</dbReference>
<dbReference type="PANTHER" id="PTHR11557:SF0">
    <property type="entry name" value="PORPHOBILINOGEN DEAMINASE"/>
    <property type="match status" value="1"/>
</dbReference>
<dbReference type="Pfam" id="PF01379">
    <property type="entry name" value="Porphobil_deam"/>
    <property type="match status" value="1"/>
</dbReference>
<dbReference type="Pfam" id="PF03900">
    <property type="entry name" value="Porphobil_deamC"/>
    <property type="match status" value="1"/>
</dbReference>
<dbReference type="PIRSF" id="PIRSF001438">
    <property type="entry name" value="4pyrrol_synth_OHMeBilane_synth"/>
    <property type="match status" value="1"/>
</dbReference>
<dbReference type="PRINTS" id="PR00151">
    <property type="entry name" value="PORPHBDMNASE"/>
</dbReference>
<dbReference type="SUPFAM" id="SSF53850">
    <property type="entry name" value="Periplasmic binding protein-like II"/>
    <property type="match status" value="1"/>
</dbReference>
<dbReference type="SUPFAM" id="SSF54782">
    <property type="entry name" value="Porphobilinogen deaminase (hydroxymethylbilane synthase), C-terminal domain"/>
    <property type="match status" value="1"/>
</dbReference>
<dbReference type="PROSITE" id="PS00533">
    <property type="entry name" value="PORPHOBILINOGEN_DEAM"/>
    <property type="match status" value="1"/>
</dbReference>
<organism>
    <name type="scientific">Geobacter sp. (strain M21)</name>
    <dbReference type="NCBI Taxonomy" id="443144"/>
    <lineage>
        <taxon>Bacteria</taxon>
        <taxon>Pseudomonadati</taxon>
        <taxon>Thermodesulfobacteriota</taxon>
        <taxon>Desulfuromonadia</taxon>
        <taxon>Geobacterales</taxon>
        <taxon>Geobacteraceae</taxon>
        <taxon>Geobacter</taxon>
    </lineage>
</organism>
<feature type="chain" id="PRO_1000204653" description="Porphobilinogen deaminase">
    <location>
        <begin position="1"/>
        <end position="318"/>
    </location>
</feature>
<feature type="modified residue" description="S-(dipyrrolylmethanemethyl)cysteine" evidence="1">
    <location>
        <position position="241"/>
    </location>
</feature>
<name>HEM3_GEOSM</name>
<reference key="1">
    <citation type="submission" date="2009-07" db="EMBL/GenBank/DDBJ databases">
        <title>Complete sequence of Geobacter sp. M21.</title>
        <authorList>
            <consortium name="US DOE Joint Genome Institute"/>
            <person name="Lucas S."/>
            <person name="Copeland A."/>
            <person name="Lapidus A."/>
            <person name="Glavina del Rio T."/>
            <person name="Dalin E."/>
            <person name="Tice H."/>
            <person name="Bruce D."/>
            <person name="Goodwin L."/>
            <person name="Pitluck S."/>
            <person name="Saunders E."/>
            <person name="Brettin T."/>
            <person name="Detter J.C."/>
            <person name="Han C."/>
            <person name="Larimer F."/>
            <person name="Land M."/>
            <person name="Hauser L."/>
            <person name="Kyrpides N."/>
            <person name="Ovchinnikova G."/>
            <person name="Lovley D."/>
        </authorList>
    </citation>
    <scope>NUCLEOTIDE SEQUENCE [LARGE SCALE GENOMIC DNA]</scope>
    <source>
        <strain>M21</strain>
    </source>
</reference>
<proteinExistence type="inferred from homology"/>
<protein>
    <recommendedName>
        <fullName evidence="1">Porphobilinogen deaminase</fullName>
        <shortName evidence="1">PBG</shortName>
        <ecNumber evidence="1">2.5.1.61</ecNumber>
    </recommendedName>
    <alternativeName>
        <fullName evidence="1">Hydroxymethylbilane synthase</fullName>
        <shortName evidence="1">HMBS</shortName>
    </alternativeName>
    <alternativeName>
        <fullName evidence="1">Pre-uroporphyrinogen synthase</fullName>
    </alternativeName>
</protein>
<gene>
    <name evidence="1" type="primary">hemC</name>
    <name type="ordered locus">GM21_0408</name>
</gene>
<sequence length="318" mass="34609">MALKELRIGTRASQLALWQANWVKSELEKRYPDMTVTLTKIKTIGDKILDVPLAQVGGKGLFVKEIEEAMLRGEIDIAVHSMKDVPTEFPEGLGLYCITEREDPRDAVISNNVKFADLPQGARIGTSALRRQAQLLKVRPDLEMVIIRGNVQTRMDKLKTEGLDAVILAAAGLNRLGFADQITELLPTDLSLPAIGQGALGIECNLSNQDVKDAISFFNHPDTSRAVRAERALLWRCEGGCQVPIAAFGEVTGDELKLTGFIASVDGKVSVKGVVTGPADDCEKLGVKLAEQLLSEGGHAILAEVYQREVSREKEIPV</sequence>
<accession>C6DYY8</accession>